<feature type="chain" id="PRO_0000222737" description="Core protein VP7">
    <location>
        <begin position="1"/>
        <end position="349"/>
    </location>
</feature>
<feature type="glycosylation site" description="N-linked (GlcNAc...) asparagine; by host" evidence="2">
    <location>
        <position position="45"/>
    </location>
</feature>
<reference key="1">
    <citation type="journal article" date="1998" name="Virus Res.">
        <title>The complete sequence of four major structural proteins of African horse sickness virus serotype 6: evolutionary relationships within and between the orbiviruses.</title>
        <authorList>
            <person name="Williams C.F."/>
            <person name="Inoue T."/>
            <person name="Lucus A.-M."/>
            <person name="Zanotto P."/>
            <person name="Roy P."/>
        </authorList>
    </citation>
    <scope>NUCLEOTIDE SEQUENCE [MRNA]</scope>
</reference>
<dbReference type="EMBL" id="AF021238">
    <property type="protein sequence ID" value="AAC40997.1"/>
    <property type="molecule type" value="mRNA"/>
</dbReference>
<dbReference type="SMR" id="O71027"/>
<dbReference type="GlyCosmos" id="O71027">
    <property type="glycosylation" value="1 site, No reported glycans"/>
</dbReference>
<dbReference type="GO" id="GO:0019031">
    <property type="term" value="C:viral envelope"/>
    <property type="evidence" value="ECO:0007669"/>
    <property type="project" value="InterPro"/>
</dbReference>
<dbReference type="GO" id="GO:0039624">
    <property type="term" value="C:viral outer capsid"/>
    <property type="evidence" value="ECO:0007669"/>
    <property type="project" value="UniProtKB-KW"/>
</dbReference>
<dbReference type="GO" id="GO:0046789">
    <property type="term" value="F:host cell surface receptor binding"/>
    <property type="evidence" value="ECO:0007669"/>
    <property type="project" value="InterPro"/>
</dbReference>
<dbReference type="GO" id="GO:0005198">
    <property type="term" value="F:structural molecule activity"/>
    <property type="evidence" value="ECO:0007669"/>
    <property type="project" value="InterPro"/>
</dbReference>
<dbReference type="GO" id="GO:0019064">
    <property type="term" value="P:fusion of virus membrane with host plasma membrane"/>
    <property type="evidence" value="ECO:0007669"/>
    <property type="project" value="InterPro"/>
</dbReference>
<dbReference type="Gene3D" id="2.60.120.170">
    <property type="match status" value="1"/>
</dbReference>
<dbReference type="Gene3D" id="1.10.250.10">
    <property type="entry name" value="Bluetongue Virus 10, subunit 1, domain 1"/>
    <property type="match status" value="1"/>
</dbReference>
<dbReference type="Gene3D" id="1.10.170.10">
    <property type="entry name" value="Bluetongue Virus 10, subunit 1, domain 3"/>
    <property type="match status" value="1"/>
</dbReference>
<dbReference type="InterPro" id="IPR008980">
    <property type="entry name" value="Capsid_hemagglutn"/>
</dbReference>
<dbReference type="InterPro" id="IPR001803">
    <property type="entry name" value="Orbi_VP7_capsid"/>
</dbReference>
<dbReference type="InterPro" id="IPR023178">
    <property type="entry name" value="Orbi_VP7_capsid_C"/>
</dbReference>
<dbReference type="InterPro" id="IPR023176">
    <property type="entry name" value="Orbi_VP7_capsid_N"/>
</dbReference>
<dbReference type="InterPro" id="IPR008935">
    <property type="entry name" value="Virus_capsid_a-hlx_vir"/>
</dbReference>
<dbReference type="Pfam" id="PF00897">
    <property type="entry name" value="Orbi_VP7"/>
    <property type="match status" value="1"/>
</dbReference>
<dbReference type="PRINTS" id="PR00903">
    <property type="entry name" value="VP7CAPSID"/>
</dbReference>
<dbReference type="SUPFAM" id="SSF48345">
    <property type="entry name" value="A virus capsid protein alpha-helical domain"/>
    <property type="match status" value="1"/>
</dbReference>
<dbReference type="SUPFAM" id="SSF49818">
    <property type="entry name" value="Viral protein domain"/>
    <property type="match status" value="1"/>
</dbReference>
<protein>
    <recommendedName>
        <fullName>Core protein VP7</fullName>
    </recommendedName>
    <alternativeName>
        <fullName>Capsid protein VP7</fullName>
    </alternativeName>
    <alternativeName>
        <fullName>VP7 antigen</fullName>
    </alternativeName>
</protein>
<gene>
    <name type="primary">Segment-7</name>
</gene>
<comment type="function">
    <text>Major structural core protein; binds to structural protein VP3. Constitutes the surface of the AHSV core.</text>
</comment>
<comment type="subunit">
    <text evidence="1">Homotrimer.</text>
</comment>
<comment type="subcellular location">
    <subcellularLocation>
        <location evidence="3">Virion</location>
    </subcellularLocation>
</comment>
<comment type="similarity">
    <text evidence="3">Belongs to the orbivirus VP7 family.</text>
</comment>
<organism>
    <name type="scientific">African horse sickness virus 6</name>
    <name type="common">AHSV-6</name>
    <dbReference type="NCBI Taxonomy" id="86060"/>
    <lineage>
        <taxon>Viruses</taxon>
        <taxon>Riboviria</taxon>
        <taxon>Orthornavirae</taxon>
        <taxon>Duplornaviricota</taxon>
        <taxon>Resentoviricetes</taxon>
        <taxon>Reovirales</taxon>
        <taxon>Sedoreoviridae</taxon>
        <taxon>Orbivirus</taxon>
        <taxon>African horse sickness virus</taxon>
    </lineage>
</organism>
<organismHost>
    <name type="scientific">Camelus dromedarius</name>
    <name type="common">Dromedary</name>
    <name type="synonym">Arabian camel</name>
    <dbReference type="NCBI Taxonomy" id="9838"/>
</organismHost>
<organismHost>
    <name type="scientific">Canis lupus familiaris</name>
    <name type="common">Dog</name>
    <name type="synonym">Canis familiaris</name>
    <dbReference type="NCBI Taxonomy" id="9615"/>
</organismHost>
<organismHost>
    <name type="scientific">Equus asinus</name>
    <name type="common">Donkey</name>
    <name type="synonym">Equus africanus asinus</name>
    <dbReference type="NCBI Taxonomy" id="9793"/>
</organismHost>
<organismHost>
    <name type="scientific">Equus caballus</name>
    <name type="common">Horse</name>
    <dbReference type="NCBI Taxonomy" id="9796"/>
</organismHost>
<organismHost>
    <name type="scientific">Equus hemionus</name>
    <name type="common">Onager</name>
    <name type="synonym">Asian wild ass</name>
    <dbReference type="NCBI Taxonomy" id="9794"/>
</organismHost>
<organismHost>
    <name type="scientific">Equus quagga burchellii</name>
    <name type="common">Burchell's zebra</name>
    <name type="synonym">Equus burchelli</name>
    <dbReference type="NCBI Taxonomy" id="89252"/>
</organismHost>
<organismHost>
    <name type="scientific">Loxodonta africana</name>
    <name type="common">African elephant</name>
    <dbReference type="NCBI Taxonomy" id="9785"/>
</organismHost>
<keyword id="KW-0167">Capsid protein</keyword>
<keyword id="KW-0325">Glycoprotein</keyword>
<keyword id="KW-1152">Outer capsid protein</keyword>
<keyword id="KW-0946">Virion</keyword>
<accession>O71027</accession>
<evidence type="ECO:0000250" key="1"/>
<evidence type="ECO:0000255" key="2"/>
<evidence type="ECO:0000305" key="3"/>
<proteinExistence type="evidence at transcript level"/>
<name>VP7_AHSV6</name>
<sequence length="349" mass="37828">MDAIAARALSVVRACVTVTDARVSLDPGVMETLGIAINRYNGLTNHSVSMRPQTQAERNEMFFMCTDMVLAALNVQIGNISPDYDQALATVGALATTEIPYNVQAMNDIVRITGQMQTFGPSKVQTGPYAGAVEVQQSGRYYVPQGRTRGGYINSNIAEVCMDAGAAGQVNALLAPRRGDAVMIYFVWRPLRIFCDPQGASLESAPGTFVTVDGVNVAAGDVVAWNTIAPVNVGNPGARRSILQFEVLWYTSLDRSLDTVPELAPTLTRCYAYVSPTWHALRAVIFQQMNMQPINPPIFPPTERNEIVAYLLVASLADVYAALRPDFRMNGVVAPVGQINRALVLAAYH</sequence>